<reference key="1">
    <citation type="submission" date="2008-01" db="EMBL/GenBank/DDBJ databases">
        <title>Complete sequence of Thermoanaerobacter pseudethanolicus 39E.</title>
        <authorList>
            <person name="Copeland A."/>
            <person name="Lucas S."/>
            <person name="Lapidus A."/>
            <person name="Barry K."/>
            <person name="Glavina del Rio T."/>
            <person name="Dalin E."/>
            <person name="Tice H."/>
            <person name="Pitluck S."/>
            <person name="Bruce D."/>
            <person name="Goodwin L."/>
            <person name="Saunders E."/>
            <person name="Brettin T."/>
            <person name="Detter J.C."/>
            <person name="Han C."/>
            <person name="Schmutz J."/>
            <person name="Larimer F."/>
            <person name="Land M."/>
            <person name="Hauser L."/>
            <person name="Kyrpides N."/>
            <person name="Lykidis A."/>
            <person name="Hemme C."/>
            <person name="Fields M.W."/>
            <person name="He Z."/>
            <person name="Zhou J."/>
            <person name="Richardson P."/>
        </authorList>
    </citation>
    <scope>NUCLEOTIDE SEQUENCE [LARGE SCALE GENOMIC DNA]</scope>
    <source>
        <strain>ATCC 33223 / DSM 2355 / 39E</strain>
    </source>
</reference>
<comment type="function">
    <text evidence="1">Located at the top of the head of the 30S subunit, it contacts several helices of the 16S rRNA. In the 70S ribosome it contacts the 23S rRNA (bridge B1a) and protein L5 of the 50S subunit (bridge B1b), connecting the 2 subunits; these bridges are implicated in subunit movement. Contacts the tRNAs in the A and P-sites.</text>
</comment>
<comment type="subunit">
    <text evidence="1">Part of the 30S ribosomal subunit. Forms a loose heterodimer with protein S19. Forms two bridges to the 50S subunit in the 70S ribosome.</text>
</comment>
<comment type="similarity">
    <text evidence="1">Belongs to the universal ribosomal protein uS13 family.</text>
</comment>
<proteinExistence type="inferred from homology"/>
<protein>
    <recommendedName>
        <fullName evidence="1">Small ribosomal subunit protein uS13</fullName>
    </recommendedName>
    <alternativeName>
        <fullName evidence="3">30S ribosomal protein S13</fullName>
    </alternativeName>
</protein>
<accession>B0KCM5</accession>
<evidence type="ECO:0000255" key="1">
    <source>
        <dbReference type="HAMAP-Rule" id="MF_01315"/>
    </source>
</evidence>
<evidence type="ECO:0000256" key="2">
    <source>
        <dbReference type="SAM" id="MobiDB-lite"/>
    </source>
</evidence>
<evidence type="ECO:0000305" key="3"/>
<name>RS13_THEP3</name>
<gene>
    <name evidence="1" type="primary">rpsM</name>
    <name type="ordered locus">Teth39_0399</name>
</gene>
<keyword id="KW-1185">Reference proteome</keyword>
<keyword id="KW-0687">Ribonucleoprotein</keyword>
<keyword id="KW-0689">Ribosomal protein</keyword>
<keyword id="KW-0694">RNA-binding</keyword>
<keyword id="KW-0699">rRNA-binding</keyword>
<keyword id="KW-0820">tRNA-binding</keyword>
<dbReference type="EMBL" id="CP000924">
    <property type="protein sequence ID" value="ABY94068.1"/>
    <property type="molecule type" value="Genomic_DNA"/>
</dbReference>
<dbReference type="RefSeq" id="WP_003868584.1">
    <property type="nucleotide sequence ID" value="NC_010321.1"/>
</dbReference>
<dbReference type="SMR" id="B0KCM5"/>
<dbReference type="STRING" id="340099.Teth39_0399"/>
<dbReference type="KEGG" id="tpd:Teth39_0399"/>
<dbReference type="eggNOG" id="COG0099">
    <property type="taxonomic scope" value="Bacteria"/>
</dbReference>
<dbReference type="HOGENOM" id="CLU_103849_1_2_9"/>
<dbReference type="Proteomes" id="UP000002156">
    <property type="component" value="Chromosome"/>
</dbReference>
<dbReference type="GO" id="GO:0005829">
    <property type="term" value="C:cytosol"/>
    <property type="evidence" value="ECO:0007669"/>
    <property type="project" value="TreeGrafter"/>
</dbReference>
<dbReference type="GO" id="GO:0015935">
    <property type="term" value="C:small ribosomal subunit"/>
    <property type="evidence" value="ECO:0007669"/>
    <property type="project" value="TreeGrafter"/>
</dbReference>
<dbReference type="GO" id="GO:0019843">
    <property type="term" value="F:rRNA binding"/>
    <property type="evidence" value="ECO:0007669"/>
    <property type="project" value="UniProtKB-UniRule"/>
</dbReference>
<dbReference type="GO" id="GO:0003735">
    <property type="term" value="F:structural constituent of ribosome"/>
    <property type="evidence" value="ECO:0007669"/>
    <property type="project" value="InterPro"/>
</dbReference>
<dbReference type="GO" id="GO:0000049">
    <property type="term" value="F:tRNA binding"/>
    <property type="evidence" value="ECO:0007669"/>
    <property type="project" value="UniProtKB-UniRule"/>
</dbReference>
<dbReference type="GO" id="GO:0006412">
    <property type="term" value="P:translation"/>
    <property type="evidence" value="ECO:0007669"/>
    <property type="project" value="UniProtKB-UniRule"/>
</dbReference>
<dbReference type="FunFam" id="1.10.8.50:FF:000001">
    <property type="entry name" value="30S ribosomal protein S13"/>
    <property type="match status" value="1"/>
</dbReference>
<dbReference type="FunFam" id="4.10.910.10:FF:000001">
    <property type="entry name" value="30S ribosomal protein S13"/>
    <property type="match status" value="1"/>
</dbReference>
<dbReference type="Gene3D" id="1.10.8.50">
    <property type="match status" value="1"/>
</dbReference>
<dbReference type="Gene3D" id="4.10.910.10">
    <property type="entry name" value="30s ribosomal protein s13, domain 2"/>
    <property type="match status" value="1"/>
</dbReference>
<dbReference type="HAMAP" id="MF_01315">
    <property type="entry name" value="Ribosomal_uS13"/>
    <property type="match status" value="1"/>
</dbReference>
<dbReference type="InterPro" id="IPR027437">
    <property type="entry name" value="Rbsml_uS13_C"/>
</dbReference>
<dbReference type="InterPro" id="IPR001892">
    <property type="entry name" value="Ribosomal_uS13"/>
</dbReference>
<dbReference type="InterPro" id="IPR010979">
    <property type="entry name" value="Ribosomal_uS13-like_H2TH"/>
</dbReference>
<dbReference type="InterPro" id="IPR019980">
    <property type="entry name" value="Ribosomal_uS13_bac-type"/>
</dbReference>
<dbReference type="InterPro" id="IPR018269">
    <property type="entry name" value="Ribosomal_uS13_CS"/>
</dbReference>
<dbReference type="NCBIfam" id="TIGR03631">
    <property type="entry name" value="uS13_bact"/>
    <property type="match status" value="1"/>
</dbReference>
<dbReference type="PANTHER" id="PTHR10871">
    <property type="entry name" value="30S RIBOSOMAL PROTEIN S13/40S RIBOSOMAL PROTEIN S18"/>
    <property type="match status" value="1"/>
</dbReference>
<dbReference type="PANTHER" id="PTHR10871:SF1">
    <property type="entry name" value="SMALL RIBOSOMAL SUBUNIT PROTEIN US13M"/>
    <property type="match status" value="1"/>
</dbReference>
<dbReference type="Pfam" id="PF00416">
    <property type="entry name" value="Ribosomal_S13"/>
    <property type="match status" value="1"/>
</dbReference>
<dbReference type="PIRSF" id="PIRSF002134">
    <property type="entry name" value="Ribosomal_S13"/>
    <property type="match status" value="1"/>
</dbReference>
<dbReference type="SUPFAM" id="SSF46946">
    <property type="entry name" value="S13-like H2TH domain"/>
    <property type="match status" value="1"/>
</dbReference>
<dbReference type="PROSITE" id="PS00646">
    <property type="entry name" value="RIBOSOMAL_S13_1"/>
    <property type="match status" value="1"/>
</dbReference>
<dbReference type="PROSITE" id="PS50159">
    <property type="entry name" value="RIBOSOMAL_S13_2"/>
    <property type="match status" value="1"/>
</dbReference>
<feature type="chain" id="PRO_1000141321" description="Small ribosomal subunit protein uS13">
    <location>
        <begin position="1"/>
        <end position="122"/>
    </location>
</feature>
<feature type="region of interest" description="Disordered" evidence="2">
    <location>
        <begin position="95"/>
        <end position="122"/>
    </location>
</feature>
<organism>
    <name type="scientific">Thermoanaerobacter pseudethanolicus (strain ATCC 33223 / 39E)</name>
    <name type="common">Clostridium thermohydrosulfuricum</name>
    <dbReference type="NCBI Taxonomy" id="340099"/>
    <lineage>
        <taxon>Bacteria</taxon>
        <taxon>Bacillati</taxon>
        <taxon>Bacillota</taxon>
        <taxon>Clostridia</taxon>
        <taxon>Thermoanaerobacterales</taxon>
        <taxon>Thermoanaerobacteraceae</taxon>
        <taxon>Thermoanaerobacter</taxon>
    </lineage>
</organism>
<sequence length="122" mass="14044">MARIAGVDLPRDKRVEIALTYIYGIGRSRSNEILAKAGVNPDTRVKDLTEEEVSRLREIIDKEYKVEGDLRKEVAMNIKRLMDIGCYRGIRHKRGLPVRGQRTRTNARTRKGPRKTVAKKKK</sequence>